<sequence>MAPYHIRKYQDSDHRSVVDLFRRGMEEHIPATFRHMLLLPRTLLLLLGVPLTLFLASGSWLLVLLSILTLFLSLWFLAKYTWEKHVMNCLHTDMADITRTYMSSHSSCFWVAESRGQTVGMVAARPVKDPLLQKKQLQLLHLSVSLQHRREGLGKAMVRTVLQFAQMQGFSEVVLSTSMLQYAALALYQGMGFQKTGETFYTYLSRLRKSPMINLKYSLTSPWEGDL</sequence>
<feature type="chain" id="PRO_0000444045" description="N-acetyltransferase family 8 member 7">
    <location>
        <begin position="1"/>
        <end position="227"/>
    </location>
</feature>
<feature type="transmembrane region" description="Helical" evidence="1">
    <location>
        <begin position="36"/>
        <end position="56"/>
    </location>
</feature>
<feature type="transmembrane region" description="Helical" evidence="1">
    <location>
        <begin position="58"/>
        <end position="78"/>
    </location>
</feature>
<feature type="domain" description="N-acetyltransferase" evidence="2">
    <location>
        <begin position="61"/>
        <end position="220"/>
    </location>
</feature>
<accession>E0CYR6</accession>
<organism evidence="6">
    <name type="scientific">Mus musculus</name>
    <name type="common">Mouse</name>
    <dbReference type="NCBI Taxonomy" id="10090"/>
    <lineage>
        <taxon>Eukaryota</taxon>
        <taxon>Metazoa</taxon>
        <taxon>Chordata</taxon>
        <taxon>Craniata</taxon>
        <taxon>Vertebrata</taxon>
        <taxon>Euteleostomi</taxon>
        <taxon>Mammalia</taxon>
        <taxon>Eutheria</taxon>
        <taxon>Euarchontoglires</taxon>
        <taxon>Glires</taxon>
        <taxon>Rodentia</taxon>
        <taxon>Myomorpha</taxon>
        <taxon>Muroidea</taxon>
        <taxon>Muridae</taxon>
        <taxon>Murinae</taxon>
        <taxon>Mus</taxon>
        <taxon>Mus</taxon>
    </lineage>
</organism>
<comment type="function">
    <text evidence="3">Has histone acetyltransferase activity in vitro, with specificity for histone H4.</text>
</comment>
<comment type="catalytic activity">
    <reaction evidence="3">
        <text>L-lysyl-[protein] + acetyl-CoA = N(6)-acetyl-L-lysyl-[protein] + CoA + H(+)</text>
        <dbReference type="Rhea" id="RHEA:45948"/>
        <dbReference type="Rhea" id="RHEA-COMP:9752"/>
        <dbReference type="Rhea" id="RHEA-COMP:10731"/>
        <dbReference type="ChEBI" id="CHEBI:15378"/>
        <dbReference type="ChEBI" id="CHEBI:29969"/>
        <dbReference type="ChEBI" id="CHEBI:57287"/>
        <dbReference type="ChEBI" id="CHEBI:57288"/>
        <dbReference type="ChEBI" id="CHEBI:61930"/>
        <dbReference type="EC" id="2.3.1.48"/>
    </reaction>
</comment>
<comment type="subcellular location">
    <subcellularLocation>
        <location evidence="1">Membrane</location>
        <topology evidence="1">Multi-pass membrane protein</topology>
    </subcellularLocation>
</comment>
<comment type="similarity">
    <text evidence="4">Belongs to the camello family.</text>
</comment>
<protein>
    <recommendedName>
        <fullName evidence="5">N-acetyltransferase family 8 member 7</fullName>
        <ecNumber evidence="3">2.3.1.48</ecNumber>
    </recommendedName>
</protein>
<dbReference type="EC" id="2.3.1.48" evidence="3"/>
<dbReference type="EMBL" id="AC162313">
    <property type="status" value="NOT_ANNOTATED_CDS"/>
    <property type="molecule type" value="Genomic_DNA"/>
</dbReference>
<dbReference type="CCDS" id="CCDS57434.1"/>
<dbReference type="RefSeq" id="NP_001240839.2">
    <property type="nucleotide sequence ID" value="NM_001253910.3"/>
</dbReference>
<dbReference type="RefSeq" id="NP_001398767.1">
    <property type="nucleotide sequence ID" value="NM_001411838.1"/>
</dbReference>
<dbReference type="RefSeq" id="XP_006505282.1">
    <property type="nucleotide sequence ID" value="XM_006505219.2"/>
</dbReference>
<dbReference type="FunCoup" id="E0CYR6">
    <property type="interactions" value="100"/>
</dbReference>
<dbReference type="STRING" id="10090.ENSMUSP00000123947"/>
<dbReference type="jPOST" id="E0CYR6"/>
<dbReference type="PaxDb" id="10090-ENSMUSP00000123947"/>
<dbReference type="PeptideAtlas" id="E0CYR6"/>
<dbReference type="ProteomicsDB" id="328936"/>
<dbReference type="Pumba" id="E0CYR6"/>
<dbReference type="Ensembl" id="ENSMUST00000160534.2">
    <property type="protein sequence ID" value="ENSMUSP00000123947.2"/>
    <property type="gene ID" value="ENSMUSG00000089694.3"/>
</dbReference>
<dbReference type="Ensembl" id="ENSMUST00000179613.2">
    <property type="protein sequence ID" value="ENSMUSP00000136338.2"/>
    <property type="gene ID" value="ENSMUSG00000089694.3"/>
</dbReference>
<dbReference type="GeneID" id="100043497"/>
<dbReference type="KEGG" id="mmu:100043497"/>
<dbReference type="UCSC" id="uc009cqa.2">
    <property type="organism name" value="mouse"/>
</dbReference>
<dbReference type="AGR" id="MGI:3782661"/>
<dbReference type="CTD" id="100043497"/>
<dbReference type="MGI" id="MGI:3782661">
    <property type="gene designation" value="Nat8f7"/>
</dbReference>
<dbReference type="VEuPathDB" id="HostDB:ENSMUSG00000089694"/>
<dbReference type="eggNOG" id="KOG3139">
    <property type="taxonomic scope" value="Eukaryota"/>
</dbReference>
<dbReference type="GeneTree" id="ENSGT00950000182932"/>
<dbReference type="HOGENOM" id="CLU_013985_10_1_1"/>
<dbReference type="InParanoid" id="E0CYR6"/>
<dbReference type="OMA" id="YKIPDTH"/>
<dbReference type="OrthoDB" id="41532at2759"/>
<dbReference type="PhylomeDB" id="E0CYR6"/>
<dbReference type="TreeFam" id="TF324687"/>
<dbReference type="BioGRID-ORCS" id="100043497">
    <property type="hits" value="2 hits in 31 CRISPR screens"/>
</dbReference>
<dbReference type="ChiTaRS" id="Nat8f7">
    <property type="organism name" value="mouse"/>
</dbReference>
<dbReference type="PRO" id="PR:E0CYR6"/>
<dbReference type="Proteomes" id="UP000000589">
    <property type="component" value="Chromosome 6"/>
</dbReference>
<dbReference type="RNAct" id="E0CYR6">
    <property type="molecule type" value="protein"/>
</dbReference>
<dbReference type="Bgee" id="ENSMUSG00000089694">
    <property type="expression patterns" value="Expressed in adult mammalian kidney and 34 other cell types or tissues"/>
</dbReference>
<dbReference type="GO" id="GO:0031965">
    <property type="term" value="C:nuclear membrane"/>
    <property type="evidence" value="ECO:0000314"/>
    <property type="project" value="MGI"/>
</dbReference>
<dbReference type="GO" id="GO:0005634">
    <property type="term" value="C:nucleus"/>
    <property type="evidence" value="ECO:0000314"/>
    <property type="project" value="MGI"/>
</dbReference>
<dbReference type="GO" id="GO:0010485">
    <property type="term" value="F:histone H4 acetyltransferase activity"/>
    <property type="evidence" value="ECO:0000314"/>
    <property type="project" value="MGI"/>
</dbReference>
<dbReference type="CDD" id="cd04301">
    <property type="entry name" value="NAT_SF"/>
    <property type="match status" value="1"/>
</dbReference>
<dbReference type="FunFam" id="3.40.630.30:FF:000118">
    <property type="entry name" value="N-acetyltransferase family 8 member 3"/>
    <property type="match status" value="1"/>
</dbReference>
<dbReference type="Gene3D" id="3.40.630.30">
    <property type="match status" value="1"/>
</dbReference>
<dbReference type="InterPro" id="IPR016181">
    <property type="entry name" value="Acyl_CoA_acyltransferase"/>
</dbReference>
<dbReference type="InterPro" id="IPR000182">
    <property type="entry name" value="GNAT_dom"/>
</dbReference>
<dbReference type="InterPro" id="IPR050769">
    <property type="entry name" value="NAT_camello-type"/>
</dbReference>
<dbReference type="PANTHER" id="PTHR13947">
    <property type="entry name" value="GNAT FAMILY N-ACETYLTRANSFERASE"/>
    <property type="match status" value="1"/>
</dbReference>
<dbReference type="PANTHER" id="PTHR13947:SF2">
    <property type="entry name" value="N-ACETYLTRANSFERASE FAMILY 8 MEMBER 3-RELATED"/>
    <property type="match status" value="1"/>
</dbReference>
<dbReference type="Pfam" id="PF00583">
    <property type="entry name" value="Acetyltransf_1"/>
    <property type="match status" value="1"/>
</dbReference>
<dbReference type="SUPFAM" id="SSF55729">
    <property type="entry name" value="Acyl-CoA N-acyltransferases (Nat)"/>
    <property type="match status" value="1"/>
</dbReference>
<dbReference type="PROSITE" id="PS51186">
    <property type="entry name" value="GNAT"/>
    <property type="match status" value="1"/>
</dbReference>
<keyword id="KW-0012">Acyltransferase</keyword>
<keyword id="KW-0472">Membrane</keyword>
<keyword id="KW-1185">Reference proteome</keyword>
<keyword id="KW-0808">Transferase</keyword>
<keyword id="KW-0812">Transmembrane</keyword>
<keyword id="KW-1133">Transmembrane helix</keyword>
<reference evidence="6" key="1">
    <citation type="journal article" date="2009" name="PLoS Biol.">
        <title>Lineage-specific biology revealed by a finished genome assembly of the mouse.</title>
        <authorList>
            <person name="Church D.M."/>
            <person name="Goodstadt L."/>
            <person name="Hillier L.W."/>
            <person name="Zody M.C."/>
            <person name="Goldstein S."/>
            <person name="She X."/>
            <person name="Bult C.J."/>
            <person name="Agarwala R."/>
            <person name="Cherry J.L."/>
            <person name="DiCuccio M."/>
            <person name="Hlavina W."/>
            <person name="Kapustin Y."/>
            <person name="Meric P."/>
            <person name="Maglott D."/>
            <person name="Birtle Z."/>
            <person name="Marques A.C."/>
            <person name="Graves T."/>
            <person name="Zhou S."/>
            <person name="Teague B."/>
            <person name="Potamousis K."/>
            <person name="Churas C."/>
            <person name="Place M."/>
            <person name="Herschleb J."/>
            <person name="Runnheim R."/>
            <person name="Forrest D."/>
            <person name="Amos-Landgraf J."/>
            <person name="Schwartz D.C."/>
            <person name="Cheng Z."/>
            <person name="Lindblad-Toh K."/>
            <person name="Eichler E.E."/>
            <person name="Ponting C.P."/>
        </authorList>
    </citation>
    <scope>NUCLEOTIDE SEQUENCE [LARGE SCALE GENOMIC DNA]</scope>
    <source>
        <strain>C57BL/6J</strain>
    </source>
</reference>
<reference evidence="4" key="2">
    <citation type="journal article" date="2014" name="Sci. Rep.">
        <title>Camello, a novel family of Histone Acetyltransferases that acetylate histone H4 and is essential for zebrafish development.</title>
        <authorList>
            <person name="Karmodiya K."/>
            <person name="Anamika K."/>
            <person name="Muley V."/>
            <person name="Pradhan S.J."/>
            <person name="Bhide Y."/>
            <person name="Galande S."/>
        </authorList>
    </citation>
    <scope>FUNCTION</scope>
    <scope>CATALYTIC ACTIVITY</scope>
</reference>
<proteinExistence type="evidence at protein level"/>
<name>NT8F7_MOUSE</name>
<evidence type="ECO:0000255" key="1"/>
<evidence type="ECO:0000255" key="2">
    <source>
        <dbReference type="PROSITE-ProRule" id="PRU00532"/>
    </source>
</evidence>
<evidence type="ECO:0000269" key="3">
    <source>
    </source>
</evidence>
<evidence type="ECO:0000305" key="4"/>
<evidence type="ECO:0000312" key="5">
    <source>
        <dbReference type="MGI" id="MGI:3782661"/>
    </source>
</evidence>
<evidence type="ECO:0000312" key="6">
    <source>
        <dbReference type="Proteomes" id="UP000000589"/>
    </source>
</evidence>
<gene>
    <name evidence="5" type="primary">Nat8f7</name>
</gene>